<gene>
    <name evidence="1" type="primary">rplX</name>
    <name type="ordered locus">cbdbA450</name>
</gene>
<feature type="chain" id="PRO_0000241591" description="Large ribosomal subunit protein uL24">
    <location>
        <begin position="1"/>
        <end position="103"/>
    </location>
</feature>
<proteinExistence type="inferred from homology"/>
<comment type="function">
    <text evidence="1">One of two assembly initiator proteins, it binds directly to the 5'-end of the 23S rRNA, where it nucleates assembly of the 50S subunit.</text>
</comment>
<comment type="function">
    <text evidence="1">One of the proteins that surrounds the polypeptide exit tunnel on the outside of the subunit.</text>
</comment>
<comment type="subunit">
    <text evidence="1">Part of the 50S ribosomal subunit.</text>
</comment>
<comment type="similarity">
    <text evidence="1">Belongs to the universal ribosomal protein uL24 family.</text>
</comment>
<organism>
    <name type="scientific">Dehalococcoides mccartyi (strain CBDB1)</name>
    <dbReference type="NCBI Taxonomy" id="255470"/>
    <lineage>
        <taxon>Bacteria</taxon>
        <taxon>Bacillati</taxon>
        <taxon>Chloroflexota</taxon>
        <taxon>Dehalococcoidia</taxon>
        <taxon>Dehalococcoidales</taxon>
        <taxon>Dehalococcoidaceae</taxon>
        <taxon>Dehalococcoides</taxon>
    </lineage>
</organism>
<name>RL24_DEHMC</name>
<accession>Q3ZZL3</accession>
<reference key="1">
    <citation type="journal article" date="2005" name="Nat. Biotechnol.">
        <title>Genome sequence of the chlorinated compound-respiring bacterium Dehalococcoides species strain CBDB1.</title>
        <authorList>
            <person name="Kube M."/>
            <person name="Beck A."/>
            <person name="Zinder S.H."/>
            <person name="Kuhl H."/>
            <person name="Reinhardt R."/>
            <person name="Adrian L."/>
        </authorList>
    </citation>
    <scope>NUCLEOTIDE SEQUENCE [LARGE SCALE GENOMIC DNA]</scope>
    <source>
        <strain>CBDB1</strain>
    </source>
</reference>
<keyword id="KW-0687">Ribonucleoprotein</keyword>
<keyword id="KW-0689">Ribosomal protein</keyword>
<keyword id="KW-0694">RNA-binding</keyword>
<keyword id="KW-0699">rRNA-binding</keyword>
<evidence type="ECO:0000255" key="1">
    <source>
        <dbReference type="HAMAP-Rule" id="MF_01326"/>
    </source>
</evidence>
<evidence type="ECO:0000305" key="2"/>
<dbReference type="EMBL" id="AJ965256">
    <property type="protein sequence ID" value="CAI82650.1"/>
    <property type="molecule type" value="Genomic_DNA"/>
</dbReference>
<dbReference type="RefSeq" id="WP_011309007.1">
    <property type="nucleotide sequence ID" value="NC_007356.1"/>
</dbReference>
<dbReference type="SMR" id="Q3ZZL3"/>
<dbReference type="KEGG" id="deh:cbdbA450"/>
<dbReference type="HOGENOM" id="CLU_093315_2_3_0"/>
<dbReference type="Proteomes" id="UP000000433">
    <property type="component" value="Chromosome"/>
</dbReference>
<dbReference type="GO" id="GO:1990904">
    <property type="term" value="C:ribonucleoprotein complex"/>
    <property type="evidence" value="ECO:0007669"/>
    <property type="project" value="UniProtKB-KW"/>
</dbReference>
<dbReference type="GO" id="GO:0005840">
    <property type="term" value="C:ribosome"/>
    <property type="evidence" value="ECO:0007669"/>
    <property type="project" value="UniProtKB-KW"/>
</dbReference>
<dbReference type="GO" id="GO:0019843">
    <property type="term" value="F:rRNA binding"/>
    <property type="evidence" value="ECO:0007669"/>
    <property type="project" value="UniProtKB-UniRule"/>
</dbReference>
<dbReference type="GO" id="GO:0003735">
    <property type="term" value="F:structural constituent of ribosome"/>
    <property type="evidence" value="ECO:0007669"/>
    <property type="project" value="InterPro"/>
</dbReference>
<dbReference type="GO" id="GO:0006412">
    <property type="term" value="P:translation"/>
    <property type="evidence" value="ECO:0007669"/>
    <property type="project" value="UniProtKB-UniRule"/>
</dbReference>
<dbReference type="CDD" id="cd06089">
    <property type="entry name" value="KOW_RPL26"/>
    <property type="match status" value="1"/>
</dbReference>
<dbReference type="FunFam" id="2.30.30.30:FF:000004">
    <property type="entry name" value="50S ribosomal protein L24"/>
    <property type="match status" value="1"/>
</dbReference>
<dbReference type="Gene3D" id="2.30.30.30">
    <property type="match status" value="1"/>
</dbReference>
<dbReference type="HAMAP" id="MF_01326_B">
    <property type="entry name" value="Ribosomal_uL24_B"/>
    <property type="match status" value="1"/>
</dbReference>
<dbReference type="InterPro" id="IPR005824">
    <property type="entry name" value="KOW"/>
</dbReference>
<dbReference type="InterPro" id="IPR014722">
    <property type="entry name" value="Rib_uL2_dom2"/>
</dbReference>
<dbReference type="InterPro" id="IPR003256">
    <property type="entry name" value="Ribosomal_uL24"/>
</dbReference>
<dbReference type="InterPro" id="IPR005825">
    <property type="entry name" value="Ribosomal_uL24_CS"/>
</dbReference>
<dbReference type="InterPro" id="IPR041988">
    <property type="entry name" value="Ribosomal_uL24_KOW"/>
</dbReference>
<dbReference type="InterPro" id="IPR008991">
    <property type="entry name" value="Translation_prot_SH3-like_sf"/>
</dbReference>
<dbReference type="NCBIfam" id="TIGR01079">
    <property type="entry name" value="rplX_bact"/>
    <property type="match status" value="1"/>
</dbReference>
<dbReference type="PANTHER" id="PTHR12903">
    <property type="entry name" value="MITOCHONDRIAL RIBOSOMAL PROTEIN L24"/>
    <property type="match status" value="1"/>
</dbReference>
<dbReference type="Pfam" id="PF00467">
    <property type="entry name" value="KOW"/>
    <property type="match status" value="1"/>
</dbReference>
<dbReference type="Pfam" id="PF17136">
    <property type="entry name" value="ribosomal_L24"/>
    <property type="match status" value="1"/>
</dbReference>
<dbReference type="SMART" id="SM00739">
    <property type="entry name" value="KOW"/>
    <property type="match status" value="1"/>
</dbReference>
<dbReference type="SUPFAM" id="SSF50104">
    <property type="entry name" value="Translation proteins SH3-like domain"/>
    <property type="match status" value="1"/>
</dbReference>
<dbReference type="PROSITE" id="PS01108">
    <property type="entry name" value="RIBOSOMAL_L24"/>
    <property type="match status" value="1"/>
</dbReference>
<protein>
    <recommendedName>
        <fullName evidence="1">Large ribosomal subunit protein uL24</fullName>
    </recommendedName>
    <alternativeName>
        <fullName evidence="2">50S ribosomal protein L24</fullName>
    </alternativeName>
</protein>
<sequence>MRLKKNDNVLVIAGKDKGKTGKVRYAYPRTDRVLVEGVNMIKRHSRAKGQAKQAGIIEREAPLHVSNLMLLCSKCNKPARIGSRELADGKSVRYCKSCNEVID</sequence>